<name>MQO_BACC4</name>
<organism>
    <name type="scientific">Bacillus cereus (strain B4264)</name>
    <dbReference type="NCBI Taxonomy" id="405532"/>
    <lineage>
        <taxon>Bacteria</taxon>
        <taxon>Bacillati</taxon>
        <taxon>Bacillota</taxon>
        <taxon>Bacilli</taxon>
        <taxon>Bacillales</taxon>
        <taxon>Bacillaceae</taxon>
        <taxon>Bacillus</taxon>
        <taxon>Bacillus cereus group</taxon>
    </lineage>
</organism>
<protein>
    <recommendedName>
        <fullName evidence="1">Probable malate:quinone oxidoreductase</fullName>
        <ecNumber evidence="1">1.1.5.4</ecNumber>
    </recommendedName>
    <alternativeName>
        <fullName evidence="1">MQO</fullName>
    </alternativeName>
    <alternativeName>
        <fullName evidence="1">Malate dehydrogenase [quinone]</fullName>
    </alternativeName>
</protein>
<evidence type="ECO:0000255" key="1">
    <source>
        <dbReference type="HAMAP-Rule" id="MF_00212"/>
    </source>
</evidence>
<dbReference type="EC" id="1.1.5.4" evidence="1"/>
<dbReference type="EMBL" id="CP001176">
    <property type="protein sequence ID" value="ACK62259.1"/>
    <property type="molecule type" value="Genomic_DNA"/>
</dbReference>
<dbReference type="RefSeq" id="WP_000069139.1">
    <property type="nucleotide sequence ID" value="NC_011725.1"/>
</dbReference>
<dbReference type="SMR" id="B7H655"/>
<dbReference type="KEGG" id="bcb:BCB4264_A2975"/>
<dbReference type="HOGENOM" id="CLU_028151_0_0_9"/>
<dbReference type="UniPathway" id="UPA00223">
    <property type="reaction ID" value="UER01008"/>
</dbReference>
<dbReference type="Proteomes" id="UP000007096">
    <property type="component" value="Chromosome"/>
</dbReference>
<dbReference type="GO" id="GO:0047545">
    <property type="term" value="F:2-hydroxyglutarate dehydrogenase activity"/>
    <property type="evidence" value="ECO:0007669"/>
    <property type="project" value="TreeGrafter"/>
</dbReference>
<dbReference type="GO" id="GO:0008924">
    <property type="term" value="F:L-malate dehydrogenase (quinone) activity"/>
    <property type="evidence" value="ECO:0007669"/>
    <property type="project" value="UniProtKB-UniRule"/>
</dbReference>
<dbReference type="GO" id="GO:0006099">
    <property type="term" value="P:tricarboxylic acid cycle"/>
    <property type="evidence" value="ECO:0007669"/>
    <property type="project" value="UniProtKB-UniRule"/>
</dbReference>
<dbReference type="HAMAP" id="MF_00212">
    <property type="entry name" value="MQO"/>
    <property type="match status" value="1"/>
</dbReference>
<dbReference type="InterPro" id="IPR036188">
    <property type="entry name" value="FAD/NAD-bd_sf"/>
</dbReference>
<dbReference type="InterPro" id="IPR006231">
    <property type="entry name" value="MQO"/>
</dbReference>
<dbReference type="NCBIfam" id="TIGR01320">
    <property type="entry name" value="mal_quin_oxido"/>
    <property type="match status" value="1"/>
</dbReference>
<dbReference type="NCBIfam" id="NF003603">
    <property type="entry name" value="PRK05257.1-1"/>
    <property type="match status" value="1"/>
</dbReference>
<dbReference type="NCBIfam" id="NF003604">
    <property type="entry name" value="PRK05257.1-3"/>
    <property type="match status" value="1"/>
</dbReference>
<dbReference type="NCBIfam" id="NF003605">
    <property type="entry name" value="PRK05257.1-4"/>
    <property type="match status" value="1"/>
</dbReference>
<dbReference type="NCBIfam" id="NF003606">
    <property type="entry name" value="PRK05257.2-1"/>
    <property type="match status" value="1"/>
</dbReference>
<dbReference type="NCBIfam" id="NF003608">
    <property type="entry name" value="PRK05257.2-4"/>
    <property type="match status" value="1"/>
</dbReference>
<dbReference type="NCBIfam" id="NF003610">
    <property type="entry name" value="PRK05257.3-1"/>
    <property type="match status" value="1"/>
</dbReference>
<dbReference type="NCBIfam" id="NF003611">
    <property type="entry name" value="PRK05257.3-2"/>
    <property type="match status" value="1"/>
</dbReference>
<dbReference type="NCBIfam" id="NF009875">
    <property type="entry name" value="PRK13339.1"/>
    <property type="match status" value="1"/>
</dbReference>
<dbReference type="PANTHER" id="PTHR43104">
    <property type="entry name" value="L-2-HYDROXYGLUTARATE DEHYDROGENASE, MITOCHONDRIAL"/>
    <property type="match status" value="1"/>
</dbReference>
<dbReference type="PANTHER" id="PTHR43104:SF2">
    <property type="entry name" value="L-2-HYDROXYGLUTARATE DEHYDROGENASE, MITOCHONDRIAL"/>
    <property type="match status" value="1"/>
</dbReference>
<dbReference type="Pfam" id="PF06039">
    <property type="entry name" value="Mqo"/>
    <property type="match status" value="1"/>
</dbReference>
<dbReference type="SUPFAM" id="SSF51905">
    <property type="entry name" value="FAD/NAD(P)-binding domain"/>
    <property type="match status" value="1"/>
</dbReference>
<sequence length="500" mass="55264">MSNMQQKTDVILIGAGIMSATLGSLLKELAPEWEIKVFEKLASAGEESSNEWNNAGTGHSALCELNYTSEKADGSIDISKAVKVNEQFQLSRQFWAYLVKSKLIRNPQDFIMPLPHMSLVQGEKNVEFLKNRFEALSKNPLFQGMEFSDAPETLKRWLPLIMEGRTSNEPMAATKIDSGTDVNFGALTRMLFDYLKTKNVELNYKHSVENIKRTKNGLWEVKVHDMNSGKIEHHTAKFVFIGGGGGSLPLLQKTGIPESKHIGGFPVSGLFMVCKNQKVVEQHHAKVYGKAKVGAPPMSVPHLDTRYIDNKKALLFGPFAGFSPKFLKTGSNLDLIGSVKPNNVLTMLAAGVKEMGLTKYLIQQVMLSHEKRMEELREFIPNAKSEDWDIVVAGQRVQVIKDTDAGGKGTLQFGTEVVSAADGSIAALLGASPGASTAVHVMLEVLEKCFPSRMVEWEEKIKEMIPSYGISLTENPRLFQDLHTSTGRTLGLNEKETVHN</sequence>
<comment type="catalytic activity">
    <reaction evidence="1">
        <text>(S)-malate + a quinone = a quinol + oxaloacetate</text>
        <dbReference type="Rhea" id="RHEA:46012"/>
        <dbReference type="ChEBI" id="CHEBI:15589"/>
        <dbReference type="ChEBI" id="CHEBI:16452"/>
        <dbReference type="ChEBI" id="CHEBI:24646"/>
        <dbReference type="ChEBI" id="CHEBI:132124"/>
        <dbReference type="EC" id="1.1.5.4"/>
    </reaction>
</comment>
<comment type="cofactor">
    <cofactor evidence="1">
        <name>FAD</name>
        <dbReference type="ChEBI" id="CHEBI:57692"/>
    </cofactor>
</comment>
<comment type="pathway">
    <text evidence="1">Carbohydrate metabolism; tricarboxylic acid cycle; oxaloacetate from (S)-malate (quinone route): step 1/1.</text>
</comment>
<comment type="similarity">
    <text evidence="1">Belongs to the MQO family.</text>
</comment>
<accession>B7H655</accession>
<proteinExistence type="inferred from homology"/>
<feature type="chain" id="PRO_1000191310" description="Probable malate:quinone oxidoreductase">
    <location>
        <begin position="1"/>
        <end position="500"/>
    </location>
</feature>
<gene>
    <name evidence="1" type="primary">mqo</name>
    <name type="ordered locus">BCB4264_A2975</name>
</gene>
<reference key="1">
    <citation type="submission" date="2008-10" db="EMBL/GenBank/DDBJ databases">
        <title>Genome sequence of Bacillus cereus B4264.</title>
        <authorList>
            <person name="Dodson R.J."/>
            <person name="Durkin A.S."/>
            <person name="Rosovitz M.J."/>
            <person name="Rasko D.A."/>
            <person name="Hoffmaster A."/>
            <person name="Ravel J."/>
            <person name="Sutton G."/>
        </authorList>
    </citation>
    <scope>NUCLEOTIDE SEQUENCE [LARGE SCALE GENOMIC DNA]</scope>
    <source>
        <strain>B4264</strain>
    </source>
</reference>
<keyword id="KW-0274">FAD</keyword>
<keyword id="KW-0285">Flavoprotein</keyword>
<keyword id="KW-0560">Oxidoreductase</keyword>
<keyword id="KW-0816">Tricarboxylic acid cycle</keyword>